<accession>Q6PGH2</accession>
<comment type="function">
    <text evidence="1">Nicotinic acid adenine dinucleotide phosphate (NAADP) binding protein required for NAADP-evoked intracellular calcium release. Confers NAADP-sensitivity to the two pore channels (TPCs) complex. Enables NAADP to activate Ca(2+) release from the endoplasmic reticulum through ryanodine receptors.</text>
</comment>
<comment type="subunit">
    <text evidence="1">Monomer. Dimer. Interacts with TPCN1.</text>
</comment>
<comment type="subcellular location">
    <subcellularLocation>
        <location evidence="1">Cytoplasm</location>
    </subcellularLocation>
    <subcellularLocation>
        <location evidence="1">Nucleus</location>
    </subcellularLocation>
    <text evidence="1">Colocalizes with type 1 ryanodine receptor (RYR1).</text>
</comment>
<comment type="similarity">
    <text evidence="3">Belongs to the JUPITER family.</text>
</comment>
<reference key="1">
    <citation type="journal article" date="2004" name="Genome Res.">
        <title>The status, quality, and expansion of the NIH full-length cDNA project: the Mammalian Gene Collection (MGC).</title>
        <authorList>
            <consortium name="The MGC Project Team"/>
        </authorList>
    </citation>
    <scope>NUCLEOTIDE SEQUENCE [LARGE SCALE MRNA]</scope>
    <source>
        <strain>C57BL/6J</strain>
        <tissue>Brain</tissue>
        <tissue>Embryonic germ cell</tissue>
    </source>
</reference>
<reference key="2">
    <citation type="journal article" date="2007" name="Proc. Natl. Acad. Sci. U.S.A.">
        <title>Large-scale phosphorylation analysis of mouse liver.</title>
        <authorList>
            <person name="Villen J."/>
            <person name="Beausoleil S.A."/>
            <person name="Gerber S.A."/>
            <person name="Gygi S.P."/>
        </authorList>
    </citation>
    <scope>PHOSPHORYLATION [LARGE SCALE ANALYSIS] AT SER-69</scope>
    <scope>IDENTIFICATION BY MASS SPECTROMETRY [LARGE SCALE ANALYSIS]</scope>
    <source>
        <tissue>Liver</tissue>
    </source>
</reference>
<reference key="3">
    <citation type="journal article" date="2010" name="Cell">
        <title>A tissue-specific atlas of mouse protein phosphorylation and expression.</title>
        <authorList>
            <person name="Huttlin E.L."/>
            <person name="Jedrychowski M.P."/>
            <person name="Elias J.E."/>
            <person name="Goswami T."/>
            <person name="Rad R."/>
            <person name="Beausoleil S.A."/>
            <person name="Villen J."/>
            <person name="Haas W."/>
            <person name="Sowa M.E."/>
            <person name="Gygi S.P."/>
        </authorList>
    </citation>
    <scope>IDENTIFICATION BY MASS SPECTROMETRY [LARGE SCALE ANALYSIS]</scope>
    <source>
        <tissue>Lung</tissue>
        <tissue>Pancreas</tissue>
        <tissue>Spleen</tissue>
    </source>
</reference>
<reference key="4">
    <citation type="journal article" date="2013" name="Mol. Cell">
        <title>SIRT5-mediated lysine desuccinylation impacts diverse metabolic pathways.</title>
        <authorList>
            <person name="Park J."/>
            <person name="Chen Y."/>
            <person name="Tishkoff D.X."/>
            <person name="Peng C."/>
            <person name="Tan M."/>
            <person name="Dai L."/>
            <person name="Xie Z."/>
            <person name="Zhang Y."/>
            <person name="Zwaans B.M."/>
            <person name="Skinner M.E."/>
            <person name="Lombard D.B."/>
            <person name="Zhao Y."/>
        </authorList>
    </citation>
    <scope>ACETYLATION [LARGE SCALE ANALYSIS] AT MET-1 AND LYS-11</scope>
    <scope>IDENTIFICATION BY MASS SPECTROMETRY [LARGE SCALE ANALYSIS]</scope>
    <source>
        <tissue>Embryonic fibroblast</tissue>
    </source>
</reference>
<sequence length="190" mass="20020">MFQGADSQAGKSGSRSMKPPGGESSDLFGSPEEGISSSKPNRMASNIFGPTEEPKNIPKRTNPPGGKGSGIFDESTPVQTRQRLNPPGGKTSDIFGSPVTATAPLAHPNKPKDHVLLCEGEDSKSDLKAATDSTPRGEQSDKGSSKEVEHAKIPEPTPTVDSHEPRLGPRPRSHNKVLNPPGGKSSLSFY</sequence>
<gene>
    <name evidence="1" type="primary">Jpt2</name>
    <name type="synonym">D17Ertd441e</name>
    <name evidence="4" type="synonym">Hn1l</name>
</gene>
<keyword id="KW-0007">Acetylation</keyword>
<keyword id="KW-0963">Cytoplasm</keyword>
<keyword id="KW-0539">Nucleus</keyword>
<keyword id="KW-0597">Phosphoprotein</keyword>
<keyword id="KW-1185">Reference proteome</keyword>
<protein>
    <recommendedName>
        <fullName evidence="1">Jupiter microtubule associated homolog 2</fullName>
    </recommendedName>
    <alternativeName>
        <fullName evidence="1">Hematological and neurological expressed 1-like protein</fullName>
        <shortName evidence="1">HN1-like protein</shortName>
    </alternativeName>
</protein>
<feature type="chain" id="PRO_0000054922" description="Jupiter microtubule associated homolog 2">
    <location>
        <begin position="1"/>
        <end position="190"/>
    </location>
</feature>
<feature type="region of interest" description="Disordered" evidence="2">
    <location>
        <begin position="1"/>
        <end position="190"/>
    </location>
</feature>
<feature type="compositionally biased region" description="Polar residues" evidence="2">
    <location>
        <begin position="1"/>
        <end position="15"/>
    </location>
</feature>
<feature type="compositionally biased region" description="Polar residues" evidence="2">
    <location>
        <begin position="35"/>
        <end position="44"/>
    </location>
</feature>
<feature type="compositionally biased region" description="Basic and acidic residues" evidence="2">
    <location>
        <begin position="110"/>
        <end position="129"/>
    </location>
</feature>
<feature type="compositionally biased region" description="Basic and acidic residues" evidence="2">
    <location>
        <begin position="138"/>
        <end position="153"/>
    </location>
</feature>
<feature type="modified residue" description="N-acetylmethionine" evidence="6">
    <location>
        <position position="1"/>
    </location>
</feature>
<feature type="modified residue" description="N6-acetyllysine" evidence="6">
    <location>
        <position position="11"/>
    </location>
</feature>
<feature type="modified residue" description="Phosphoserine" evidence="1">
    <location>
        <position position="30"/>
    </location>
</feature>
<feature type="modified residue" description="Phosphoserine" evidence="1">
    <location>
        <position position="45"/>
    </location>
</feature>
<feature type="modified residue" description="Phosphoserine" evidence="5">
    <location>
        <position position="69"/>
    </location>
</feature>
<feature type="modified residue" description="Phosphoserine" evidence="1">
    <location>
        <position position="97"/>
    </location>
</feature>
<feature type="modified residue" description="Phosphoserine" evidence="1">
    <location>
        <position position="144"/>
    </location>
</feature>
<evidence type="ECO:0000250" key="1">
    <source>
        <dbReference type="UniProtKB" id="Q9H910"/>
    </source>
</evidence>
<evidence type="ECO:0000256" key="2">
    <source>
        <dbReference type="SAM" id="MobiDB-lite"/>
    </source>
</evidence>
<evidence type="ECO:0000305" key="3"/>
<evidence type="ECO:0000312" key="4">
    <source>
        <dbReference type="MGI" id="MGI:1196260"/>
    </source>
</evidence>
<evidence type="ECO:0007744" key="5">
    <source>
    </source>
</evidence>
<evidence type="ECO:0007744" key="6">
    <source>
    </source>
</evidence>
<dbReference type="EMBL" id="BC057024">
    <property type="protein sequence ID" value="AAH57024.1"/>
    <property type="molecule type" value="mRNA"/>
</dbReference>
<dbReference type="EMBL" id="BC080740">
    <property type="protein sequence ID" value="AAH80740.1"/>
    <property type="molecule type" value="mRNA"/>
</dbReference>
<dbReference type="CCDS" id="CCDS28504.1"/>
<dbReference type="RefSeq" id="NP_945175.1">
    <property type="nucleotide sequence ID" value="NM_198937.2"/>
</dbReference>
<dbReference type="BioGRID" id="206322">
    <property type="interactions" value="2"/>
</dbReference>
<dbReference type="FunCoup" id="Q6PGH2">
    <property type="interactions" value="3032"/>
</dbReference>
<dbReference type="STRING" id="10090.ENSMUSP00000024981"/>
<dbReference type="GlyGen" id="Q6PGH2">
    <property type="glycosylation" value="2 sites, 1 O-linked glycan (1 site)"/>
</dbReference>
<dbReference type="iPTMnet" id="Q6PGH2"/>
<dbReference type="PhosphoSitePlus" id="Q6PGH2"/>
<dbReference type="SwissPalm" id="Q6PGH2"/>
<dbReference type="jPOST" id="Q6PGH2"/>
<dbReference type="PaxDb" id="10090-ENSMUSP00000024981"/>
<dbReference type="ProteomicsDB" id="269037"/>
<dbReference type="Pumba" id="Q6PGH2"/>
<dbReference type="Antibodypedia" id="23196">
    <property type="antibodies" value="79 antibodies from 14 providers"/>
</dbReference>
<dbReference type="DNASU" id="52009"/>
<dbReference type="Ensembl" id="ENSMUST00000024981.9">
    <property type="protein sequence ID" value="ENSMUSP00000024981.8"/>
    <property type="gene ID" value="ENSMUSG00000024165.10"/>
</dbReference>
<dbReference type="Ensembl" id="ENSMUST00000233067.2">
    <property type="protein sequence ID" value="ENSMUSP00000156651.2"/>
    <property type="gene ID" value="ENSMUSG00000024165.10"/>
</dbReference>
<dbReference type="GeneID" id="52009"/>
<dbReference type="KEGG" id="mmu:52009"/>
<dbReference type="UCSC" id="uc008azi.1">
    <property type="organism name" value="mouse"/>
</dbReference>
<dbReference type="AGR" id="MGI:1196260"/>
<dbReference type="CTD" id="90861"/>
<dbReference type="MGI" id="MGI:1196260">
    <property type="gene designation" value="Jpt2"/>
</dbReference>
<dbReference type="VEuPathDB" id="HostDB:ENSMUSG00000024165"/>
<dbReference type="eggNOG" id="ENOG502S1G7">
    <property type="taxonomic scope" value="Eukaryota"/>
</dbReference>
<dbReference type="GeneTree" id="ENSGT00390000007652"/>
<dbReference type="HOGENOM" id="CLU_111612_0_0_1"/>
<dbReference type="InParanoid" id="Q6PGH2"/>
<dbReference type="OMA" id="RQFINPP"/>
<dbReference type="OrthoDB" id="6367565at2759"/>
<dbReference type="PhylomeDB" id="Q6PGH2"/>
<dbReference type="TreeFam" id="TF327169"/>
<dbReference type="BioGRID-ORCS" id="52009">
    <property type="hits" value="1 hit in 81 CRISPR screens"/>
</dbReference>
<dbReference type="ChiTaRS" id="Jpt2">
    <property type="organism name" value="mouse"/>
</dbReference>
<dbReference type="PRO" id="PR:Q6PGH2"/>
<dbReference type="Proteomes" id="UP000000589">
    <property type="component" value="Chromosome 17"/>
</dbReference>
<dbReference type="RNAct" id="Q6PGH2">
    <property type="molecule type" value="protein"/>
</dbReference>
<dbReference type="Bgee" id="ENSMUSG00000024165">
    <property type="expression patterns" value="Expressed in manus and 212 other cell types or tissues"/>
</dbReference>
<dbReference type="ExpressionAtlas" id="Q6PGH2">
    <property type="expression patterns" value="baseline and differential"/>
</dbReference>
<dbReference type="GO" id="GO:0005737">
    <property type="term" value="C:cytoplasm"/>
    <property type="evidence" value="ECO:0000250"/>
    <property type="project" value="UniProtKB"/>
</dbReference>
<dbReference type="GO" id="GO:0005634">
    <property type="term" value="C:nucleus"/>
    <property type="evidence" value="ECO:0000250"/>
    <property type="project" value="UniProtKB"/>
</dbReference>
<dbReference type="InterPro" id="IPR033335">
    <property type="entry name" value="JUPITER"/>
</dbReference>
<dbReference type="PANTHER" id="PTHR34930">
    <property type="entry name" value="GEO05313P1"/>
    <property type="match status" value="1"/>
</dbReference>
<dbReference type="PANTHER" id="PTHR34930:SF5">
    <property type="entry name" value="JUPITER MICROTUBULE ASSOCIATED HOMOLOG 2"/>
    <property type="match status" value="1"/>
</dbReference>
<organism>
    <name type="scientific">Mus musculus</name>
    <name type="common">Mouse</name>
    <dbReference type="NCBI Taxonomy" id="10090"/>
    <lineage>
        <taxon>Eukaryota</taxon>
        <taxon>Metazoa</taxon>
        <taxon>Chordata</taxon>
        <taxon>Craniata</taxon>
        <taxon>Vertebrata</taxon>
        <taxon>Euteleostomi</taxon>
        <taxon>Mammalia</taxon>
        <taxon>Eutheria</taxon>
        <taxon>Euarchontoglires</taxon>
        <taxon>Glires</taxon>
        <taxon>Rodentia</taxon>
        <taxon>Myomorpha</taxon>
        <taxon>Muroidea</taxon>
        <taxon>Muridae</taxon>
        <taxon>Murinae</taxon>
        <taxon>Mus</taxon>
        <taxon>Mus</taxon>
    </lineage>
</organism>
<name>JUPI2_MOUSE</name>
<proteinExistence type="evidence at protein level"/>